<name>FBPAP_METTM</name>
<evidence type="ECO:0000250" key="1">
    <source>
        <dbReference type="UniProtKB" id="F9VMT6"/>
    </source>
</evidence>
<evidence type="ECO:0000255" key="2">
    <source>
        <dbReference type="HAMAP-Rule" id="MF_02067"/>
    </source>
</evidence>
<evidence type="ECO:0000269" key="3">
    <source>
    </source>
</evidence>
<evidence type="ECO:0000303" key="4">
    <source>
    </source>
</evidence>
<evidence type="ECO:0000305" key="5"/>
<evidence type="ECO:0000305" key="6">
    <source>
    </source>
</evidence>
<evidence type="ECO:0000312" key="7">
    <source>
        <dbReference type="EMBL" id="ADL57873.1"/>
    </source>
</evidence>
<accession>D9PUH5</accession>
<keyword id="KW-0119">Carbohydrate metabolism</keyword>
<keyword id="KW-0312">Gluconeogenesis</keyword>
<keyword id="KW-0378">Hydrolase</keyword>
<keyword id="KW-0456">Lyase</keyword>
<keyword id="KW-0460">Magnesium</keyword>
<keyword id="KW-0479">Metal-binding</keyword>
<keyword id="KW-0704">Schiff base</keyword>
<feature type="chain" id="PRO_0000437182" description="Fructose-1,6-bisphosphate aldolase/phosphatase">
    <location>
        <begin position="1"/>
        <end position="365"/>
    </location>
</feature>
<feature type="active site" description="Proton acceptor; for FBP phosphatase activity" evidence="1">
    <location>
        <position position="11"/>
    </location>
</feature>
<feature type="active site" description="Proton donor/acceptor; for FBP aldolase activity" evidence="1">
    <location>
        <position position="228"/>
    </location>
</feature>
<feature type="active site" description="Schiff-base intermediate with DHAP; for FBP aldolase activity" evidence="1">
    <location>
        <position position="231"/>
    </location>
</feature>
<feature type="binding site" evidence="1">
    <location>
        <position position="11"/>
    </location>
    <ligand>
        <name>Mg(2+)</name>
        <dbReference type="ChEBI" id="CHEBI:18420"/>
        <label>1</label>
    </ligand>
</feature>
<feature type="binding site" description="in other chain" evidence="1">
    <location>
        <position position="18"/>
    </location>
    <ligand>
        <name>beta-D-fructose 1,6-bisphosphate</name>
        <dbReference type="ChEBI" id="CHEBI:32966"/>
        <note>ligand shared between dimeric partners</note>
    </ligand>
</feature>
<feature type="binding site" evidence="1">
    <location>
        <position position="18"/>
    </location>
    <ligand>
        <name>dihydroxyacetone phosphate</name>
        <dbReference type="ChEBI" id="CHEBI:57642"/>
    </ligand>
</feature>
<feature type="binding site" evidence="1">
    <location>
        <position position="18"/>
    </location>
    <ligand>
        <name>Mg(2+)</name>
        <dbReference type="ChEBI" id="CHEBI:18420"/>
        <label>1</label>
    </ligand>
</feature>
<feature type="binding site" evidence="1">
    <location>
        <position position="52"/>
    </location>
    <ligand>
        <name>Mg(2+)</name>
        <dbReference type="ChEBI" id="CHEBI:18420"/>
        <label>1</label>
    </ligand>
</feature>
<feature type="binding site" evidence="1">
    <location>
        <position position="52"/>
    </location>
    <ligand>
        <name>Mg(2+)</name>
        <dbReference type="ChEBI" id="CHEBI:18420"/>
        <label>2</label>
    </ligand>
</feature>
<feature type="binding site" evidence="1">
    <location>
        <position position="53"/>
    </location>
    <ligand>
        <name>Mg(2+)</name>
        <dbReference type="ChEBI" id="CHEBI:18420"/>
        <label>2</label>
    </ligand>
</feature>
<feature type="binding site" description="in other chain" evidence="1">
    <location>
        <position position="90"/>
    </location>
    <ligand>
        <name>beta-D-fructose 1,6-bisphosphate</name>
        <dbReference type="ChEBI" id="CHEBI:32966"/>
        <note>ligand shared between dimeric partners</note>
    </ligand>
</feature>
<feature type="binding site" evidence="1">
    <location>
        <position position="94"/>
    </location>
    <ligand>
        <name>Mg(2+)</name>
        <dbReference type="ChEBI" id="CHEBI:18420"/>
        <label>1</label>
    </ligand>
</feature>
<feature type="binding site" description="in other chain" evidence="1">
    <location>
        <begin position="103"/>
        <end position="104"/>
    </location>
    <ligand>
        <name>beta-D-fructose 1,6-bisphosphate</name>
        <dbReference type="ChEBI" id="CHEBI:32966"/>
        <note>ligand shared between dimeric partners</note>
    </ligand>
</feature>
<feature type="binding site" evidence="1">
    <location>
        <position position="131"/>
    </location>
    <ligand>
        <name>Mg(2+)</name>
        <dbReference type="ChEBI" id="CHEBI:18420"/>
        <label>2</label>
    </ligand>
</feature>
<feature type="binding site" description="in other chain" evidence="1">
    <location>
        <position position="132"/>
    </location>
    <ligand>
        <name>beta-D-fructose 1,6-bisphosphate</name>
        <dbReference type="ChEBI" id="CHEBI:32966"/>
        <note>ligand shared between dimeric partners</note>
    </ligand>
</feature>
<feature type="binding site" evidence="1">
    <location>
        <position position="132"/>
    </location>
    <ligand>
        <name>dihydroxyacetone phosphate</name>
        <dbReference type="ChEBI" id="CHEBI:57642"/>
    </ligand>
</feature>
<feature type="binding site" evidence="1">
    <location>
        <position position="231"/>
    </location>
    <ligand>
        <name>Mg(2+)</name>
        <dbReference type="ChEBI" id="CHEBI:18420"/>
        <label>3</label>
    </ligand>
</feature>
<feature type="binding site" evidence="1">
    <location>
        <position position="232"/>
    </location>
    <ligand>
        <name>Mg(2+)</name>
        <dbReference type="ChEBI" id="CHEBI:18420"/>
        <label>3</label>
    </ligand>
</feature>
<feature type="binding site" evidence="1">
    <location>
        <position position="232"/>
    </location>
    <ligand>
        <name>Mg(2+)</name>
        <dbReference type="ChEBI" id="CHEBI:18420"/>
        <label>4</label>
    </ligand>
</feature>
<feature type="binding site" evidence="1">
    <location>
        <position position="233"/>
    </location>
    <ligand>
        <name>Mg(2+)</name>
        <dbReference type="ChEBI" id="CHEBI:18420"/>
        <label>2</label>
    </ligand>
</feature>
<feature type="binding site" evidence="1">
    <location>
        <position position="233"/>
    </location>
    <ligand>
        <name>Mg(2+)</name>
        <dbReference type="ChEBI" id="CHEBI:18420"/>
        <label>3</label>
    </ligand>
</feature>
<feature type="binding site" evidence="1">
    <location>
        <begin position="241"/>
        <end position="242"/>
    </location>
    <ligand>
        <name>beta-D-fructose 1,6-bisphosphate</name>
        <dbReference type="ChEBI" id="CHEBI:32966"/>
        <note>ligand shared between dimeric partners</note>
    </ligand>
</feature>
<feature type="binding site" description="in other chain" evidence="1">
    <location>
        <position position="265"/>
    </location>
    <ligand>
        <name>beta-D-fructose 1,6-bisphosphate</name>
        <dbReference type="ChEBI" id="CHEBI:32966"/>
        <note>ligand shared between dimeric partners</note>
    </ligand>
</feature>
<feature type="binding site" evidence="1">
    <location>
        <position position="265"/>
    </location>
    <ligand>
        <name>dihydroxyacetone phosphate</name>
        <dbReference type="ChEBI" id="CHEBI:57642"/>
    </ligand>
</feature>
<feature type="binding site" description="in other chain" evidence="1">
    <location>
        <position position="286"/>
    </location>
    <ligand>
        <name>beta-D-fructose 1,6-bisphosphate</name>
        <dbReference type="ChEBI" id="CHEBI:32966"/>
        <note>ligand shared between dimeric partners</note>
    </ligand>
</feature>
<feature type="binding site" evidence="1">
    <location>
        <position position="286"/>
    </location>
    <ligand>
        <name>dihydroxyacetone phosphate</name>
        <dbReference type="ChEBI" id="CHEBI:57642"/>
    </ligand>
</feature>
<feature type="binding site" description="in other chain" evidence="1">
    <location>
        <position position="347"/>
    </location>
    <ligand>
        <name>beta-D-fructose 1,6-bisphosphate</name>
        <dbReference type="ChEBI" id="CHEBI:32966"/>
        <note>ligand shared between dimeric partners</note>
    </ligand>
</feature>
<comment type="function">
    <text evidence="3">Catalyzes two subsequent steps in gluconeogenesis: the aldol condensation of dihydroxyacetone phosphate (DHAP) and glyceraldehyde-3-phosphate (GA3P) to fructose-1,6-bisphosphate (FBP), and the dephosphorylation of FBP to fructose-6-phosphate (F6P).</text>
</comment>
<comment type="catalytic activity">
    <reaction evidence="3">
        <text>beta-D-fructose 1,6-bisphosphate + H2O = beta-D-fructose 6-phosphate + phosphate</text>
        <dbReference type="Rhea" id="RHEA:11064"/>
        <dbReference type="ChEBI" id="CHEBI:15377"/>
        <dbReference type="ChEBI" id="CHEBI:32966"/>
        <dbReference type="ChEBI" id="CHEBI:43474"/>
        <dbReference type="ChEBI" id="CHEBI:57634"/>
        <dbReference type="EC" id="3.1.3.11"/>
    </reaction>
</comment>
<comment type="catalytic activity">
    <reaction evidence="3">
        <text>beta-D-fructose 1,6-bisphosphate = D-glyceraldehyde 3-phosphate + dihydroxyacetone phosphate</text>
        <dbReference type="Rhea" id="RHEA:14729"/>
        <dbReference type="ChEBI" id="CHEBI:32966"/>
        <dbReference type="ChEBI" id="CHEBI:57642"/>
        <dbReference type="ChEBI" id="CHEBI:59776"/>
        <dbReference type="EC" id="4.1.2.13"/>
    </reaction>
</comment>
<comment type="cofactor">
    <cofactor evidence="1">
        <name>Mg(2+)</name>
        <dbReference type="ChEBI" id="CHEBI:18420"/>
    </cofactor>
</comment>
<comment type="pathway">
    <text evidence="6">Carbohydrate biosynthesis; gluconeogenesis.</text>
</comment>
<comment type="subunit">
    <text evidence="1">Homooctamer; dimer of tetramers.</text>
</comment>
<comment type="domain">
    <text evidence="1">Consists of a single catalytic domain, but remodels its active-site architecture via a large structural change to exhibit dual activities.</text>
</comment>
<comment type="similarity">
    <text evidence="2 5">Belongs to the FBP aldolase/phosphatase family.</text>
</comment>
<proteinExistence type="evidence at protein level"/>
<dbReference type="EC" id="3.1.3.11" evidence="3"/>
<dbReference type="EC" id="4.1.2.13" evidence="3"/>
<dbReference type="EMBL" id="CP001710">
    <property type="protein sequence ID" value="ADL57873.1"/>
    <property type="molecule type" value="Genomic_DNA"/>
</dbReference>
<dbReference type="RefSeq" id="WP_013295100.1">
    <property type="nucleotide sequence ID" value="NC_014408.1"/>
</dbReference>
<dbReference type="SMR" id="D9PUH5"/>
<dbReference type="STRING" id="79929.MTBMA_c02650"/>
<dbReference type="PaxDb" id="79929-MTBMA_c02650"/>
<dbReference type="GeneID" id="41326813"/>
<dbReference type="GeneID" id="9703971"/>
<dbReference type="KEGG" id="mmg:MTBMA_c02650"/>
<dbReference type="PATRIC" id="fig|79929.8.peg.259"/>
<dbReference type="HOGENOM" id="CLU_041630_0_0_2"/>
<dbReference type="OrthoDB" id="5829at2157"/>
<dbReference type="UniPathway" id="UPA00138"/>
<dbReference type="Proteomes" id="UP000000345">
    <property type="component" value="Chromosome"/>
</dbReference>
<dbReference type="GO" id="GO:0042132">
    <property type="term" value="F:fructose 1,6-bisphosphate 1-phosphatase activity"/>
    <property type="evidence" value="ECO:0007669"/>
    <property type="project" value="UniProtKB-UniRule"/>
</dbReference>
<dbReference type="GO" id="GO:0004332">
    <property type="term" value="F:fructose-bisphosphate aldolase activity"/>
    <property type="evidence" value="ECO:0007669"/>
    <property type="project" value="UniProtKB-UniRule"/>
</dbReference>
<dbReference type="GO" id="GO:0000287">
    <property type="term" value="F:magnesium ion binding"/>
    <property type="evidence" value="ECO:0007669"/>
    <property type="project" value="UniProtKB-UniRule"/>
</dbReference>
<dbReference type="GO" id="GO:0006094">
    <property type="term" value="P:gluconeogenesis"/>
    <property type="evidence" value="ECO:0007669"/>
    <property type="project" value="UniProtKB-UniRule"/>
</dbReference>
<dbReference type="HAMAP" id="MF_02067">
    <property type="entry name" value="FBP_aldolase_phosphatase"/>
    <property type="match status" value="1"/>
</dbReference>
<dbReference type="InterPro" id="IPR002803">
    <property type="entry name" value="FBPase_V"/>
</dbReference>
<dbReference type="InterPro" id="IPR036076">
    <property type="entry name" value="FBPase_V_sf"/>
</dbReference>
<dbReference type="NCBIfam" id="NF041126">
    <property type="entry name" value="FBP_aldo_phos"/>
    <property type="match status" value="1"/>
</dbReference>
<dbReference type="PANTHER" id="PTHR38341">
    <property type="entry name" value="FRUCTOSE-1,6-BISPHOSPHATE ALDOLASE/PHOSPHATASE"/>
    <property type="match status" value="1"/>
</dbReference>
<dbReference type="PANTHER" id="PTHR38341:SF1">
    <property type="entry name" value="FRUCTOSE-1,6-BISPHOSPHATE ALDOLASE_PHOSPHATASE"/>
    <property type="match status" value="1"/>
</dbReference>
<dbReference type="Pfam" id="PF01950">
    <property type="entry name" value="FBPase_3"/>
    <property type="match status" value="1"/>
</dbReference>
<dbReference type="PIRSF" id="PIRSF015647">
    <property type="entry name" value="FBPtase_archl"/>
    <property type="match status" value="1"/>
</dbReference>
<dbReference type="SUPFAM" id="SSF111249">
    <property type="entry name" value="Sulfolobus fructose-1,6-bisphosphatase-like"/>
    <property type="match status" value="1"/>
</dbReference>
<sequence length="365" mass="40387">MKTTISVIKADVGSVAGHAVAHEALKKKCDEILAEARDTGILEDYYITNCGDDIDLIMTHRNGEENEEVHQTAWNAFREATEVARGLKLYGAGQDLLSDTFSGNIKGMGPGCAEMEFKERPSDPVIIFCCDKTEPGAFNLPLFRMFADPFNTAGLVIDPTLHNGYEFEVFDVVEHKKVTMACPDEMYDLLALLGSISRYVIKKIHRRDDGEIAASVSTERLNLMAGKYIGKDDPVAIVRAQSGFPAAGEVVEPFAFPHLVGGWMRGSHNGPLMPVAQRDATPVRFDGPPRVIGLGFQIADCKLVGPIDMFDDPSFDRSRQLASEIAEYMRRHGPFEPHRLPSDEMEYTSLPGVLEKLGDRFEDMD</sequence>
<gene>
    <name evidence="2" type="primary">fbp</name>
    <name evidence="7" type="ordered locus">MTBMA_c02650</name>
</gene>
<protein>
    <recommendedName>
        <fullName evidence="4">Fructose-1,6-bisphosphate aldolase/phosphatase</fullName>
        <shortName evidence="2">FBP A/P</shortName>
        <shortName evidence="4">FBP aldolase/phosphatase</shortName>
        <ecNumber evidence="3">3.1.3.11</ecNumber>
        <ecNumber evidence="3">4.1.2.13</ecNumber>
    </recommendedName>
</protein>
<reference key="1">
    <citation type="journal article" date="2010" name="J. Bacteriol.">
        <title>Complete genome sequence of Methanothermobacter marburgensis, a methanoarchaeon model organism.</title>
        <authorList>
            <person name="Liesegang H."/>
            <person name="Kaster A.K."/>
            <person name="Wiezer A."/>
            <person name="Goenrich M."/>
            <person name="Wollherr A."/>
            <person name="Seedorf H."/>
            <person name="Gottschalk G."/>
            <person name="Thauer R.K."/>
        </authorList>
    </citation>
    <scope>NUCLEOTIDE SEQUENCE [LARGE SCALE GENOMIC DNA]</scope>
    <source>
        <strain>ATCC BAA-927 / DSM 2133 / JCM 14651 / NBRC 100331 / OCM 82 / Marburg</strain>
    </source>
</reference>
<reference key="2">
    <citation type="journal article" date="2010" name="Nature">
        <title>Fructose 1,6-bisphosphate aldolase/phosphatase may be an ancestral gluconeogenic enzyme.</title>
        <authorList>
            <person name="Say R.F."/>
            <person name="Fuchs G."/>
        </authorList>
    </citation>
    <scope>FUNCTION AS BOTH FBPASE AND FBP ALDOLASE</scope>
    <scope>CATALYTIC ACTIVITY</scope>
    <scope>PATHWAY</scope>
    <source>
        <strain>ATCC BAA-927 / DSM 2133 / JCM 14651 / NBRC 100331 / OCM 82 / Marburg</strain>
    </source>
</reference>
<organism>
    <name type="scientific">Methanothermobacter marburgensis (strain ATCC BAA-927 / DSM 2133 / JCM 14651 / NBRC 100331 / OCM 82 / Marburg)</name>
    <name type="common">Methanobacterium thermoautotrophicum</name>
    <dbReference type="NCBI Taxonomy" id="79929"/>
    <lineage>
        <taxon>Archaea</taxon>
        <taxon>Methanobacteriati</taxon>
        <taxon>Methanobacteriota</taxon>
        <taxon>Methanomada group</taxon>
        <taxon>Methanobacteria</taxon>
        <taxon>Methanobacteriales</taxon>
        <taxon>Methanobacteriaceae</taxon>
        <taxon>Methanothermobacter</taxon>
    </lineage>
</organism>